<geneLocation type="chloroplast"/>
<accession>O49843</accession>
<feature type="chain" id="PRO_0000199179" description="R-phycoerythrin alpha chain">
    <location>
        <begin position="1"/>
        <end position="164"/>
    </location>
</feature>
<feature type="binding site" description="covalent" evidence="1">
    <location>
        <position position="82"/>
    </location>
    <ligand>
        <name>(2R,3E)-phycoerythrobilin</name>
        <dbReference type="ChEBI" id="CHEBI:85276"/>
        <label>1</label>
    </ligand>
</feature>
<feature type="binding site" description="covalent" evidence="1">
    <location>
        <position position="139"/>
    </location>
    <ligand>
        <name>(2R,3E)-phycoerythrobilin</name>
        <dbReference type="ChEBI" id="CHEBI:85276"/>
        <label>2</label>
    </ligand>
</feature>
<sequence>MKSVITTTISAADAAGRFPSSSDLESVQGNIQRAAARLEAAEKLASNHEAVVKEAGDACFAKYSYLKNPGEAGDSQEKVNKCYRDVDHYMRLVNYCLVVGGTGPVDEWGIAGAREVYRTLNLPTSAYVASFAFARDRLCVPRDMSAQAGVEYAGNLDYLINALS</sequence>
<name>PHEA_PYRTE</name>
<evidence type="ECO:0000250" key="1"/>
<evidence type="ECO:0000305" key="2"/>
<gene>
    <name type="primary">cpeA</name>
</gene>
<comment type="function">
    <text>Light-harvesting photosynthetic bile pigment-protein from the phycobiliprotein complex.</text>
</comment>
<comment type="subunit">
    <text>Heterodimer of an alpha and a beta chain.</text>
</comment>
<comment type="subcellular location">
    <subcellularLocation>
        <location evidence="1">Plastid</location>
        <location evidence="1">Chloroplast thylakoid membrane</location>
        <topology evidence="1">Peripheral membrane protein</topology>
        <orientation evidence="1">Stromal side</orientation>
    </subcellularLocation>
    <text evidence="1">Forms the periphery of the phycobilisome rod.</text>
</comment>
<comment type="PTM">
    <text evidence="1">Contains two covalently linked bilin chromophores.</text>
</comment>
<comment type="similarity">
    <text evidence="2">Belongs to the phycobiliprotein family.</text>
</comment>
<organism>
    <name type="scientific">Pyropia tenera</name>
    <name type="common">Nori</name>
    <name type="synonym">Porphyra tenera</name>
    <dbReference type="NCBI Taxonomy" id="2785"/>
    <lineage>
        <taxon>Eukaryota</taxon>
        <taxon>Rhodophyta</taxon>
        <taxon>Bangiophyceae</taxon>
        <taxon>Bangiales</taxon>
        <taxon>Bangiaceae</taxon>
        <taxon>Pyropia</taxon>
    </lineage>
</organism>
<proteinExistence type="inferred from homology"/>
<keyword id="KW-0042">Antenna complex</keyword>
<keyword id="KW-0089">Bile pigment</keyword>
<keyword id="KW-0150">Chloroplast</keyword>
<keyword id="KW-0157">Chromophore</keyword>
<keyword id="KW-0249">Electron transport</keyword>
<keyword id="KW-0472">Membrane</keyword>
<keyword id="KW-0602">Photosynthesis</keyword>
<keyword id="KW-0605">Phycobilisome</keyword>
<keyword id="KW-0934">Plastid</keyword>
<keyword id="KW-0793">Thylakoid</keyword>
<keyword id="KW-0813">Transport</keyword>
<reference key="1">
    <citation type="online journal article" date="1997" name="Plant Gene Register">
        <title>Phycoerythrin encoding gene from Porphyra tenera.</title>
        <authorList>
            <person name="Kim B.-K."/>
            <person name="Chung G.-H."/>
            <person name="Fujita Y."/>
        </authorList>
        <locator>PGR97-158</locator>
    </citation>
    <scope>NUCLEOTIDE SEQUENCE [GENOMIC DNA]</scope>
    <source>
        <strain>Minomi</strain>
    </source>
</reference>
<protein>
    <recommendedName>
        <fullName>R-phycoerythrin alpha chain</fullName>
    </recommendedName>
</protein>
<dbReference type="EMBL" id="D89877">
    <property type="protein sequence ID" value="BAA24200.1"/>
    <property type="molecule type" value="Genomic_DNA"/>
</dbReference>
<dbReference type="SMR" id="O49843"/>
<dbReference type="GO" id="GO:0009535">
    <property type="term" value="C:chloroplast thylakoid membrane"/>
    <property type="evidence" value="ECO:0007669"/>
    <property type="project" value="UniProtKB-SubCell"/>
</dbReference>
<dbReference type="GO" id="GO:0030089">
    <property type="term" value="C:phycobilisome"/>
    <property type="evidence" value="ECO:0007669"/>
    <property type="project" value="UniProtKB-KW"/>
</dbReference>
<dbReference type="GO" id="GO:0015979">
    <property type="term" value="P:photosynthesis"/>
    <property type="evidence" value="ECO:0007669"/>
    <property type="project" value="UniProtKB-KW"/>
</dbReference>
<dbReference type="CDD" id="cd14769">
    <property type="entry name" value="PE_alpha"/>
    <property type="match status" value="1"/>
</dbReference>
<dbReference type="Gene3D" id="1.10.490.20">
    <property type="entry name" value="Phycocyanins"/>
    <property type="match status" value="1"/>
</dbReference>
<dbReference type="InterPro" id="IPR009050">
    <property type="entry name" value="Globin-like_sf"/>
</dbReference>
<dbReference type="InterPro" id="IPR012128">
    <property type="entry name" value="Phycobilisome_asu/bsu"/>
</dbReference>
<dbReference type="InterPro" id="IPR038719">
    <property type="entry name" value="Phycobilisome_asu/bsu_sf"/>
</dbReference>
<dbReference type="PANTHER" id="PTHR34011:SF4">
    <property type="entry name" value="C-PHYCOCYANIN ALPHA SUBUNIT"/>
    <property type="match status" value="1"/>
</dbReference>
<dbReference type="PANTHER" id="PTHR34011">
    <property type="entry name" value="PHYCOBILISOME 32.1 KDA LINKER POLYPEPTIDE, PHYCOCYANIN-ASSOCIATED, ROD 2-RELATED"/>
    <property type="match status" value="1"/>
</dbReference>
<dbReference type="Pfam" id="PF00502">
    <property type="entry name" value="Phycobilisome"/>
    <property type="match status" value="1"/>
</dbReference>
<dbReference type="PIRSF" id="PIRSF000081">
    <property type="entry name" value="Phycocyanin"/>
    <property type="match status" value="1"/>
</dbReference>
<dbReference type="SUPFAM" id="SSF46458">
    <property type="entry name" value="Globin-like"/>
    <property type="match status" value="1"/>
</dbReference>